<evidence type="ECO:0000255" key="1">
    <source>
        <dbReference type="HAMAP-Rule" id="MF_01187"/>
    </source>
</evidence>
<name>Y2306_ACISJ</name>
<feature type="chain" id="PRO_0000291048" description="UPF0434 protein Ajs_2306">
    <location>
        <begin position="1"/>
        <end position="60"/>
    </location>
</feature>
<accession>A1W893</accession>
<dbReference type="EMBL" id="CP000539">
    <property type="protein sequence ID" value="ABM42468.1"/>
    <property type="molecule type" value="Genomic_DNA"/>
</dbReference>
<dbReference type="SMR" id="A1W893"/>
<dbReference type="STRING" id="232721.Ajs_2306"/>
<dbReference type="KEGG" id="ajs:Ajs_2306"/>
<dbReference type="eggNOG" id="COG2835">
    <property type="taxonomic scope" value="Bacteria"/>
</dbReference>
<dbReference type="HOGENOM" id="CLU_155659_2_2_4"/>
<dbReference type="Proteomes" id="UP000000645">
    <property type="component" value="Chromosome"/>
</dbReference>
<dbReference type="GO" id="GO:0005829">
    <property type="term" value="C:cytosol"/>
    <property type="evidence" value="ECO:0007669"/>
    <property type="project" value="TreeGrafter"/>
</dbReference>
<dbReference type="FunFam" id="2.20.25.10:FF:000002">
    <property type="entry name" value="UPF0434 protein YcaR"/>
    <property type="match status" value="1"/>
</dbReference>
<dbReference type="Gene3D" id="2.20.25.10">
    <property type="match status" value="1"/>
</dbReference>
<dbReference type="HAMAP" id="MF_01187">
    <property type="entry name" value="UPF0434"/>
    <property type="match status" value="1"/>
</dbReference>
<dbReference type="InterPro" id="IPR005651">
    <property type="entry name" value="Trm112-like"/>
</dbReference>
<dbReference type="PANTHER" id="PTHR33505:SF4">
    <property type="entry name" value="PROTEIN PREY, MITOCHONDRIAL"/>
    <property type="match status" value="1"/>
</dbReference>
<dbReference type="PANTHER" id="PTHR33505">
    <property type="entry name" value="ZGC:162634"/>
    <property type="match status" value="1"/>
</dbReference>
<dbReference type="Pfam" id="PF03966">
    <property type="entry name" value="Trm112p"/>
    <property type="match status" value="1"/>
</dbReference>
<dbReference type="SUPFAM" id="SSF158997">
    <property type="entry name" value="Trm112p-like"/>
    <property type="match status" value="1"/>
</dbReference>
<comment type="similarity">
    <text evidence="1">Belongs to the UPF0434 family.</text>
</comment>
<protein>
    <recommendedName>
        <fullName evidence="1">UPF0434 protein Ajs_2306</fullName>
    </recommendedName>
</protein>
<sequence length="60" mass="6877">MDPKLLELLVCPVTKGPLTYDRERQELISRSARLAYPVRDGIPVLLENEARPLSDEELEQ</sequence>
<reference key="1">
    <citation type="submission" date="2006-12" db="EMBL/GenBank/DDBJ databases">
        <title>Complete sequence of chromosome 1 of Acidovorax sp. JS42.</title>
        <authorList>
            <person name="Copeland A."/>
            <person name="Lucas S."/>
            <person name="Lapidus A."/>
            <person name="Barry K."/>
            <person name="Detter J.C."/>
            <person name="Glavina del Rio T."/>
            <person name="Dalin E."/>
            <person name="Tice H."/>
            <person name="Pitluck S."/>
            <person name="Chertkov O."/>
            <person name="Brettin T."/>
            <person name="Bruce D."/>
            <person name="Han C."/>
            <person name="Tapia R."/>
            <person name="Gilna P."/>
            <person name="Schmutz J."/>
            <person name="Larimer F."/>
            <person name="Land M."/>
            <person name="Hauser L."/>
            <person name="Kyrpides N."/>
            <person name="Kim E."/>
            <person name="Stahl D."/>
            <person name="Richardson P."/>
        </authorList>
    </citation>
    <scope>NUCLEOTIDE SEQUENCE [LARGE SCALE GENOMIC DNA]</scope>
    <source>
        <strain>JS42</strain>
    </source>
</reference>
<organism>
    <name type="scientific">Acidovorax sp. (strain JS42)</name>
    <dbReference type="NCBI Taxonomy" id="232721"/>
    <lineage>
        <taxon>Bacteria</taxon>
        <taxon>Pseudomonadati</taxon>
        <taxon>Pseudomonadota</taxon>
        <taxon>Betaproteobacteria</taxon>
        <taxon>Burkholderiales</taxon>
        <taxon>Comamonadaceae</taxon>
        <taxon>Acidovorax</taxon>
    </lineage>
</organism>
<proteinExistence type="inferred from homology"/>
<gene>
    <name type="ordered locus">Ajs_2306</name>
</gene>